<evidence type="ECO:0000255" key="1"/>
<evidence type="ECO:0000255" key="2">
    <source>
        <dbReference type="PROSITE-ProRule" id="PRU01110"/>
    </source>
</evidence>
<evidence type="ECO:0000256" key="3">
    <source>
        <dbReference type="SAM" id="MobiDB-lite"/>
    </source>
</evidence>
<evidence type="ECO:0000303" key="4">
    <source>
    </source>
</evidence>
<evidence type="ECO:0000305" key="5"/>
<evidence type="ECO:0000305" key="6">
    <source>
    </source>
</evidence>
<evidence type="ECO:0000312" key="7">
    <source>
        <dbReference type="Araport" id="AT2G22560"/>
    </source>
</evidence>
<evidence type="ECO:0000312" key="8">
    <source>
        <dbReference type="EMBL" id="AAD22346.1"/>
    </source>
</evidence>
<evidence type="ECO:0000312" key="9">
    <source>
        <dbReference type="Proteomes" id="UP000006548"/>
    </source>
</evidence>
<accession>F4IJK1</accession>
<accession>Q9SJX9</accession>
<name>NET2D_ARATH</name>
<feature type="chain" id="PRO_0000431856" description="Protein NETWORKED 2D">
    <location>
        <begin position="1"/>
        <end position="947"/>
    </location>
</feature>
<feature type="domain" description="NAB" evidence="2">
    <location>
        <begin position="10"/>
        <end position="90"/>
    </location>
</feature>
<feature type="region of interest" description="Disordered" evidence="3">
    <location>
        <begin position="455"/>
        <end position="555"/>
    </location>
</feature>
<feature type="region of interest" description="Disordered" evidence="3">
    <location>
        <begin position="580"/>
        <end position="620"/>
    </location>
</feature>
<feature type="coiled-coil region" evidence="1">
    <location>
        <begin position="176"/>
        <end position="205"/>
    </location>
</feature>
<feature type="coiled-coil region" evidence="1">
    <location>
        <begin position="247"/>
        <end position="342"/>
    </location>
</feature>
<feature type="coiled-coil region" evidence="1">
    <location>
        <begin position="375"/>
        <end position="433"/>
    </location>
</feature>
<feature type="coiled-coil region" evidence="1">
    <location>
        <begin position="645"/>
        <end position="684"/>
    </location>
</feature>
<feature type="coiled-coil region" evidence="1">
    <location>
        <begin position="744"/>
        <end position="773"/>
    </location>
</feature>
<feature type="compositionally biased region" description="Basic and acidic residues" evidence="3">
    <location>
        <begin position="474"/>
        <end position="514"/>
    </location>
</feature>
<feature type="compositionally biased region" description="Polar residues" evidence="3">
    <location>
        <begin position="525"/>
        <end position="536"/>
    </location>
</feature>
<feature type="compositionally biased region" description="Basic and acidic residues" evidence="3">
    <location>
        <begin position="537"/>
        <end position="555"/>
    </location>
</feature>
<feature type="compositionally biased region" description="Basic and acidic residues" evidence="3">
    <location>
        <begin position="580"/>
        <end position="589"/>
    </location>
</feature>
<feature type="compositionally biased region" description="Basic and acidic residues" evidence="3">
    <location>
        <begin position="610"/>
        <end position="620"/>
    </location>
</feature>
<comment type="function">
    <text evidence="6">Plant-specific actin binding protein. May be part of a membrane-cytoskeletal adapter complex.</text>
</comment>
<comment type="similarity">
    <text evidence="5">Belongs to the NET family.</text>
</comment>
<comment type="sequence caution" evidence="5">
    <conflict type="erroneous gene model prediction">
        <sequence resource="EMBL-CDS" id="AAD22346"/>
    </conflict>
</comment>
<reference key="1">
    <citation type="journal article" date="1999" name="Nature">
        <title>Sequence and analysis of chromosome 2 of the plant Arabidopsis thaliana.</title>
        <authorList>
            <person name="Lin X."/>
            <person name="Kaul S."/>
            <person name="Rounsley S.D."/>
            <person name="Shea T.P."/>
            <person name="Benito M.-I."/>
            <person name="Town C.D."/>
            <person name="Fujii C.Y."/>
            <person name="Mason T.M."/>
            <person name="Bowman C.L."/>
            <person name="Barnstead M.E."/>
            <person name="Feldblyum T.V."/>
            <person name="Buell C.R."/>
            <person name="Ketchum K.A."/>
            <person name="Lee J.J."/>
            <person name="Ronning C.M."/>
            <person name="Koo H.L."/>
            <person name="Moffat K.S."/>
            <person name="Cronin L.A."/>
            <person name="Shen M."/>
            <person name="Pai G."/>
            <person name="Van Aken S."/>
            <person name="Umayam L."/>
            <person name="Tallon L.J."/>
            <person name="Gill J.E."/>
            <person name="Adams M.D."/>
            <person name="Carrera A.J."/>
            <person name="Creasy T.H."/>
            <person name="Goodman H.M."/>
            <person name="Somerville C.R."/>
            <person name="Copenhaver G.P."/>
            <person name="Preuss D."/>
            <person name="Nierman W.C."/>
            <person name="White O."/>
            <person name="Eisen J.A."/>
            <person name="Salzberg S.L."/>
            <person name="Fraser C.M."/>
            <person name="Venter J.C."/>
        </authorList>
    </citation>
    <scope>NUCLEOTIDE SEQUENCE [LARGE SCALE GENOMIC DNA]</scope>
    <source>
        <strain>cv. Columbia</strain>
    </source>
</reference>
<reference key="2">
    <citation type="journal article" date="2017" name="Plant J.">
        <title>Araport11: a complete reannotation of the Arabidopsis thaliana reference genome.</title>
        <authorList>
            <person name="Cheng C.Y."/>
            <person name="Krishnakumar V."/>
            <person name="Chan A.P."/>
            <person name="Thibaud-Nissen F."/>
            <person name="Schobel S."/>
            <person name="Town C.D."/>
        </authorList>
    </citation>
    <scope>GENOME REANNOTATION</scope>
    <source>
        <strain>cv. Columbia</strain>
    </source>
</reference>
<reference key="3">
    <citation type="journal article" date="2012" name="Curr. Biol.">
        <title>A superfamily of actin-binding proteins at the actin-membrane nexus of higher plants.</title>
        <authorList>
            <person name="Deeks M.J."/>
            <person name="Calcutt J.R."/>
            <person name="Ingle E.K."/>
            <person name="Hawkins T.J."/>
            <person name="Chapman S."/>
            <person name="Richardson A.C."/>
            <person name="Mentlak D.A."/>
            <person name="Dixon M.R."/>
            <person name="Cartwright F."/>
            <person name="Smertenko A.P."/>
            <person name="Oparka K."/>
            <person name="Hussey P.J."/>
        </authorList>
    </citation>
    <scope>GENE FAMILY</scope>
    <scope>NOMENCLATURE</scope>
</reference>
<reference key="4">
    <citation type="journal article" date="2014" name="Front. Plant Sci.">
        <title>The evolution of the actin binding NET superfamily.</title>
        <authorList>
            <person name="Hawkins T.J."/>
            <person name="Deeks M.J."/>
            <person name="Wang P."/>
            <person name="Hussey P.J."/>
        </authorList>
    </citation>
    <scope>GENE FAMILY</scope>
</reference>
<proteinExistence type="inferred from homology"/>
<protein>
    <recommendedName>
        <fullName evidence="4">Protein NETWORKED 2D</fullName>
    </recommendedName>
</protein>
<keyword id="KW-0175">Coiled coil</keyword>
<keyword id="KW-1185">Reference proteome</keyword>
<dbReference type="EMBL" id="AC006592">
    <property type="protein sequence ID" value="AAD22346.1"/>
    <property type="status" value="ALT_SEQ"/>
    <property type="molecule type" value="Genomic_DNA"/>
</dbReference>
<dbReference type="EMBL" id="CP002685">
    <property type="protein sequence ID" value="AEC07322.1"/>
    <property type="molecule type" value="Genomic_DNA"/>
</dbReference>
<dbReference type="PIR" id="B84614">
    <property type="entry name" value="B84614"/>
</dbReference>
<dbReference type="RefSeq" id="NP_179842.2">
    <property type="nucleotide sequence ID" value="NM_127822.3"/>
</dbReference>
<dbReference type="SMR" id="F4IJK1"/>
<dbReference type="FunCoup" id="F4IJK1">
    <property type="interactions" value="36"/>
</dbReference>
<dbReference type="STRING" id="3702.F4IJK1"/>
<dbReference type="iPTMnet" id="F4IJK1"/>
<dbReference type="PaxDb" id="3702-AT2G22560.1"/>
<dbReference type="ProteomicsDB" id="251294"/>
<dbReference type="EnsemblPlants" id="AT2G22560.1">
    <property type="protein sequence ID" value="AT2G22560.1"/>
    <property type="gene ID" value="AT2G22560"/>
</dbReference>
<dbReference type="GeneID" id="816788"/>
<dbReference type="Gramene" id="AT2G22560.1">
    <property type="protein sequence ID" value="AT2G22560.1"/>
    <property type="gene ID" value="AT2G22560"/>
</dbReference>
<dbReference type="KEGG" id="ath:AT2G22560"/>
<dbReference type="Araport" id="AT2G22560"/>
<dbReference type="TAIR" id="AT2G22560">
    <property type="gene designation" value="NET2D"/>
</dbReference>
<dbReference type="eggNOG" id="ENOG502QQVH">
    <property type="taxonomic scope" value="Eukaryota"/>
</dbReference>
<dbReference type="HOGENOM" id="CLU_004324_0_0_1"/>
<dbReference type="InParanoid" id="F4IJK1"/>
<dbReference type="OMA" id="PEEGAHF"/>
<dbReference type="PRO" id="PR:F4IJK1"/>
<dbReference type="Proteomes" id="UP000006548">
    <property type="component" value="Chromosome 2"/>
</dbReference>
<dbReference type="ExpressionAtlas" id="F4IJK1">
    <property type="expression patterns" value="baseline and differential"/>
</dbReference>
<dbReference type="GO" id="GO:0016020">
    <property type="term" value="C:membrane"/>
    <property type="evidence" value="ECO:0007669"/>
    <property type="project" value="UniProtKB-ARBA"/>
</dbReference>
<dbReference type="GO" id="GO:0003779">
    <property type="term" value="F:actin binding"/>
    <property type="evidence" value="ECO:0007669"/>
    <property type="project" value="InterPro"/>
</dbReference>
<dbReference type="InterPro" id="IPR011684">
    <property type="entry name" value="NAB"/>
</dbReference>
<dbReference type="InterPro" id="IPR056889">
    <property type="entry name" value="NET2A-D/KIP1-like_C"/>
</dbReference>
<dbReference type="InterPro" id="IPR056888">
    <property type="entry name" value="NET2A-D/KIP1-like_dom"/>
</dbReference>
<dbReference type="PANTHER" id="PTHR31631">
    <property type="entry name" value="PROTEIN NETWORKED 2D"/>
    <property type="match status" value="1"/>
</dbReference>
<dbReference type="PANTHER" id="PTHR31631:SF0">
    <property type="entry name" value="PROTEIN NETWORKED 2D"/>
    <property type="match status" value="1"/>
</dbReference>
<dbReference type="Pfam" id="PF07765">
    <property type="entry name" value="KIP1"/>
    <property type="match status" value="1"/>
</dbReference>
<dbReference type="Pfam" id="PF25014">
    <property type="entry name" value="NET2A"/>
    <property type="match status" value="1"/>
</dbReference>
<dbReference type="Pfam" id="PF24918">
    <property type="entry name" value="NET2A_C"/>
    <property type="match status" value="1"/>
</dbReference>
<dbReference type="PROSITE" id="PS51774">
    <property type="entry name" value="NAB"/>
    <property type="match status" value="1"/>
</dbReference>
<organism evidence="9">
    <name type="scientific">Arabidopsis thaliana</name>
    <name type="common">Mouse-ear cress</name>
    <dbReference type="NCBI Taxonomy" id="3702"/>
    <lineage>
        <taxon>Eukaryota</taxon>
        <taxon>Viridiplantae</taxon>
        <taxon>Streptophyta</taxon>
        <taxon>Embryophyta</taxon>
        <taxon>Tracheophyta</taxon>
        <taxon>Spermatophyta</taxon>
        <taxon>Magnoliopsida</taxon>
        <taxon>eudicotyledons</taxon>
        <taxon>Gunneridae</taxon>
        <taxon>Pentapetalae</taxon>
        <taxon>rosids</taxon>
        <taxon>malvids</taxon>
        <taxon>Brassicales</taxon>
        <taxon>Brassicaceae</taxon>
        <taxon>Camelineae</taxon>
        <taxon>Arabidopsis</taxon>
    </lineage>
</organism>
<sequence length="947" mass="108171">MLQRAASNAYSWWWASHIRTKQSKWLEQNLQDIEEKVQYVLKLLQEDGDSFAKRAEMYYKKRPELISFVEESYRAYRALAERYDHISTELQNANTTIASVFPDQVPNFAMDDDIDMSKFAKRSNISGANVPNVPKLPVKDLKSAVRVATKKLQPRKSMKYTGGSTNVVVKSSGLSKPEAMGEIDKLQKEILALQTEKEFVKSSYEIGLSKYWEFEKGIKEKQERICGLQDEFGESVAIEDEEARRLMTETAIKSCQEKLVELQEKQEKSYEEAREEHVKIKESKEKLRSMASQFLGDESVFAKDDGDEVRRTAELDHEIKEMSRKKKELESVKEKIREHFESGANSSLNGTDMAEKVDELVNKVISLESAVSSQTALIQRLRNETNGLQTQISTLETDKALLADDKSDLRNKLKEMEEKLKALQDLDRNVLDKSSNLQTHFDDACHNLDNLSGGNLHEVKPESESDNLAISIEPQKDLEGEKRTLDISEEIKEHQKETGEEKKEAPVKSVKFEQTRNATIAEDSTIPSTNPDTVLESTEKVDSDLEKQDASDKTDSVLDNVLENQAASDQTDSVLDSVLEKQGESDKIDSVPSNVSEKESDISFNGEQQEDQKEKEGEPDWKEMFMKGMENREKHLLTEYTTILRNFKDMKKTLDETKTKMKTENATKDDEIKLLREKMSLLQKGLGDSNDLMENQLSNDDYSIGFMAAENQNMSLVEEQFRLNIDELLEENLDFWLRFSTAFGQIQSYDTSIEDLQAEISKLEQRRKQDGSSTAKYALRSDVRPLYVHLREINTDLGLWLEKGAALKEELKSRFESLCNIQDEITKALKSSAEDDDFRFTSYQAAKFQGEVLNMKQENNKVADELQAGLDHITTLQLEVDKTLGKLIDEFALSGSKNKSDLDLQHSDSRSRVPLRSFIFGSKQKRAKPSIFSCMHPSLYRKMKTST</sequence>
<gene>
    <name evidence="4" type="primary">NET2D</name>
    <name evidence="7" type="ordered locus">At2g22560</name>
    <name evidence="8" type="ORF">F14M13.4</name>
</gene>